<evidence type="ECO:0000250" key="1"/>
<evidence type="ECO:0000255" key="2"/>
<evidence type="ECO:0000255" key="3">
    <source>
        <dbReference type="PROSITE-ProRule" id="PRU01210"/>
    </source>
</evidence>
<evidence type="ECO:0000305" key="4"/>
<sequence length="86" mass="9385">MSIFPIALALLLIGLEEGEAARDGYPLSKNNNCKIYCPDTDVCKDTCKNRASAPDGKCDGWNSCYCFKVPDHIPVWGDPGTKPCMT</sequence>
<keyword id="KW-1015">Disulfide bond</keyword>
<keyword id="KW-0872">Ion channel impairing toxin</keyword>
<keyword id="KW-0528">Neurotoxin</keyword>
<keyword id="KW-0964">Secreted</keyword>
<keyword id="KW-0732">Signal</keyword>
<keyword id="KW-0800">Toxin</keyword>
<keyword id="KW-0738">Voltage-gated sodium channel impairing toxin</keyword>
<protein>
    <recommendedName>
        <fullName>Toxin Tpa6</fullName>
    </recommendedName>
    <alternativeName>
        <fullName>T-alpha* NaTx7.4</fullName>
    </alternativeName>
</protein>
<feature type="signal peptide" evidence="2">
    <location>
        <begin position="1"/>
        <end position="20"/>
    </location>
</feature>
<feature type="chain" id="PRO_5000851448" description="Toxin Tpa6">
    <location>
        <begin position="21"/>
        <end position="86"/>
    </location>
</feature>
<feature type="domain" description="LCN-type CS-alpha/beta" evidence="3">
    <location>
        <begin position="22"/>
        <end position="85"/>
    </location>
</feature>
<feature type="disulfide bond" evidence="3">
    <location>
        <begin position="33"/>
        <end position="84"/>
    </location>
</feature>
<feature type="disulfide bond" evidence="3">
    <location>
        <begin position="37"/>
        <end position="58"/>
    </location>
</feature>
<feature type="disulfide bond" evidence="3">
    <location>
        <begin position="43"/>
        <end position="64"/>
    </location>
</feature>
<feature type="disulfide bond" evidence="3">
    <location>
        <begin position="47"/>
        <end position="66"/>
    </location>
</feature>
<dbReference type="EMBL" id="HE585241">
    <property type="protein sequence ID" value="CCD31435.1"/>
    <property type="molecule type" value="mRNA"/>
</dbReference>
<dbReference type="SMR" id="H1ZZI7"/>
<dbReference type="GO" id="GO:0005576">
    <property type="term" value="C:extracellular region"/>
    <property type="evidence" value="ECO:0007669"/>
    <property type="project" value="UniProtKB-SubCell"/>
</dbReference>
<dbReference type="GO" id="GO:0019871">
    <property type="term" value="F:sodium channel inhibitor activity"/>
    <property type="evidence" value="ECO:0007669"/>
    <property type="project" value="InterPro"/>
</dbReference>
<dbReference type="GO" id="GO:0090729">
    <property type="term" value="F:toxin activity"/>
    <property type="evidence" value="ECO:0007669"/>
    <property type="project" value="UniProtKB-KW"/>
</dbReference>
<dbReference type="CDD" id="cd23106">
    <property type="entry name" value="neurotoxins_LC_scorpion"/>
    <property type="match status" value="1"/>
</dbReference>
<dbReference type="Gene3D" id="3.30.30.10">
    <property type="entry name" value="Knottin, scorpion toxin-like"/>
    <property type="match status" value="1"/>
</dbReference>
<dbReference type="InterPro" id="IPR044062">
    <property type="entry name" value="LCN-type_CS_alpha_beta_dom"/>
</dbReference>
<dbReference type="InterPro" id="IPR036574">
    <property type="entry name" value="Scorpion_toxin-like_sf"/>
</dbReference>
<dbReference type="InterPro" id="IPR002061">
    <property type="entry name" value="Scorpion_toxinL/defensin"/>
</dbReference>
<dbReference type="Pfam" id="PF00537">
    <property type="entry name" value="Toxin_3"/>
    <property type="match status" value="1"/>
</dbReference>
<dbReference type="SUPFAM" id="SSF57095">
    <property type="entry name" value="Scorpion toxin-like"/>
    <property type="match status" value="1"/>
</dbReference>
<dbReference type="PROSITE" id="PS51863">
    <property type="entry name" value="LCN_CSAB"/>
    <property type="match status" value="1"/>
</dbReference>
<organism>
    <name type="scientific">Tityus pachyurus</name>
    <name type="common">Colombian scorpion</name>
    <dbReference type="NCBI Taxonomy" id="288781"/>
    <lineage>
        <taxon>Eukaryota</taxon>
        <taxon>Metazoa</taxon>
        <taxon>Ecdysozoa</taxon>
        <taxon>Arthropoda</taxon>
        <taxon>Chelicerata</taxon>
        <taxon>Arachnida</taxon>
        <taxon>Scorpiones</taxon>
        <taxon>Buthida</taxon>
        <taxon>Buthoidea</taxon>
        <taxon>Buthidae</taxon>
        <taxon>Tityus</taxon>
    </lineage>
</organism>
<name>SCX6_TITPA</name>
<proteinExistence type="evidence at transcript level"/>
<comment type="function">
    <text evidence="1">Beta toxins bind voltage-independently at site-4 of sodium channels (Nav) and shift the voltage of activation toward more negative potentials thereby affecting sodium channel activation and promoting spontaneous and repetitive firing.</text>
</comment>
<comment type="subcellular location">
    <subcellularLocation>
        <location evidence="1">Secreted</location>
    </subcellularLocation>
</comment>
<comment type="tissue specificity">
    <text>Expressed by the venom gland.</text>
</comment>
<comment type="domain">
    <text evidence="4">Has the structural arrangement of an alpha-helix connected to antiparallel beta-sheets by disulfide bonds (CS-alpha/beta).</text>
</comment>
<comment type="similarity">
    <text evidence="4">Belongs to the long (4 C-C) scorpion toxin superfamily. Sodium channel inhibitor family. Beta subfamily.</text>
</comment>
<reference key="1">
    <citation type="journal article" date="2012" name="PLoS ONE">
        <title>Identification and phylogenetic analysis of Tityus pachyurus and Tityus obscurus novel putative Na+-channel scorpion toxins.</title>
        <authorList>
            <person name="Guerrero-Vargas J.A."/>
            <person name="Mourao C.B."/>
            <person name="Quintero-Hernandez V."/>
            <person name="Possani L.D."/>
            <person name="Schwartz E.F."/>
        </authorList>
    </citation>
    <scope>NUCLEOTIDE SEQUENCE [MRNA]</scope>
    <scope>NOMENCLATURE</scope>
    <source>
        <tissue>Venom gland</tissue>
    </source>
</reference>
<accession>H1ZZI7</accession>